<keyword id="KW-0025">Alternative splicing</keyword>
<keyword id="KW-1015">Disulfide bond</keyword>
<keyword id="KW-0328">Glycosyltransferase</keyword>
<keyword id="KW-0333">Golgi apparatus</keyword>
<keyword id="KW-0430">Lectin</keyword>
<keyword id="KW-0464">Manganese</keyword>
<keyword id="KW-0472">Membrane</keyword>
<keyword id="KW-0479">Metal-binding</keyword>
<keyword id="KW-1267">Proteomics identification</keyword>
<keyword id="KW-1185">Reference proteome</keyword>
<keyword id="KW-0735">Signal-anchor</keyword>
<keyword id="KW-0808">Transferase</keyword>
<keyword id="KW-0812">Transmembrane</keyword>
<keyword id="KW-1133">Transmembrane helix</keyword>
<comment type="function">
    <text evidence="7">Catalyzes the initial reaction in O-linked oligosaccharide biosynthesis, the transfer of an N-acetyl-D-galactosamine residue to a serine or threonine residue on the protein receptor.</text>
</comment>
<comment type="catalytic activity">
    <reaction evidence="7">
        <text>L-seryl-[protein] + UDP-N-acetyl-alpha-D-galactosamine = a 3-O-[N-acetyl-alpha-D-galactosaminyl]-L-seryl-[protein] + UDP + H(+)</text>
        <dbReference type="Rhea" id="RHEA:23956"/>
        <dbReference type="Rhea" id="RHEA-COMP:9863"/>
        <dbReference type="Rhea" id="RHEA-COMP:12788"/>
        <dbReference type="ChEBI" id="CHEBI:15378"/>
        <dbReference type="ChEBI" id="CHEBI:29999"/>
        <dbReference type="ChEBI" id="CHEBI:53604"/>
        <dbReference type="ChEBI" id="CHEBI:58223"/>
        <dbReference type="ChEBI" id="CHEBI:67138"/>
        <dbReference type="EC" id="2.4.1.41"/>
    </reaction>
</comment>
<comment type="catalytic activity">
    <reaction evidence="7">
        <text>L-threonyl-[protein] + UDP-N-acetyl-alpha-D-galactosamine = a 3-O-[N-acetyl-alpha-D-galactosaminyl]-L-threonyl-[protein] + UDP + H(+)</text>
        <dbReference type="Rhea" id="RHEA:52424"/>
        <dbReference type="Rhea" id="RHEA-COMP:11060"/>
        <dbReference type="Rhea" id="RHEA-COMP:11689"/>
        <dbReference type="ChEBI" id="CHEBI:15378"/>
        <dbReference type="ChEBI" id="CHEBI:30013"/>
        <dbReference type="ChEBI" id="CHEBI:58223"/>
        <dbReference type="ChEBI" id="CHEBI:67138"/>
        <dbReference type="ChEBI" id="CHEBI:87075"/>
        <dbReference type="EC" id="2.4.1.41"/>
    </reaction>
</comment>
<comment type="cofactor">
    <cofactor evidence="1">
        <name>Mn(2+)</name>
        <dbReference type="ChEBI" id="CHEBI:29035"/>
    </cofactor>
</comment>
<comment type="biophysicochemical properties">
    <kinetics>
        <KM evidence="7">251 uM for Muc5AC</KM>
        <KM evidence="7">310 uM for Muc5AC-3</KM>
        <KM evidence="7">390 uM for Muc5AC-13</KM>
        <KM evidence="7">332 uM for EA2</KM>
    </kinetics>
</comment>
<comment type="pathway">
    <text>Protein modification; protein glycosylation.</text>
</comment>
<comment type="subcellular location">
    <subcellularLocation>
        <location evidence="1">Golgi apparatus membrane</location>
        <topology evidence="1">Single-pass type II membrane protein</topology>
    </subcellularLocation>
</comment>
<comment type="alternative products">
    <event type="alternative splicing"/>
    <isoform>
        <id>Q8N428-1</id>
        <name>1</name>
        <sequence type="displayed"/>
    </isoform>
    <isoform>
        <id>Q8N428-2</id>
        <name>2</name>
        <sequence type="described" ref="VSP_011231"/>
    </isoform>
</comment>
<comment type="domain">
    <text evidence="1">There are two conserved domains in the glycosyltransferase region: the N-terminal domain (domain A, also called GT1 motif), which is probably involved in manganese coordination and substrate binding and the C-terminal domain (domain B, also called Gal/GalNAc-T motif), which is probably involved in catalytic reaction and UDP-Gal binding.</text>
</comment>
<comment type="domain">
    <text evidence="1">The ricin B-type lectin domain binds to GalNAc and contributes to the glycopeptide specificity.</text>
</comment>
<comment type="similarity">
    <text evidence="10">Belongs to the glycosyltransferase 2 family. GalNAc-T subfamily.</text>
</comment>
<comment type="sequence caution" evidence="10">
    <conflict type="erroneous initiation">
        <sequence resource="EMBL-CDS" id="BAA86444"/>
    </conflict>
    <text>Extended N-terminus.</text>
</comment>
<comment type="online information" name="Functional Glycomics Gateway - GTase">
    <link uri="http://www.functionalglycomics.org/glycomics/molecule/jsp/glycoEnzyme/viewGlycoEnzyme.jsp?gbpId=gt_hum_499"/>
    <text>Putative polypeptide N-acetylgalactosaminyltransferase-like protein 1</text>
</comment>
<sequence>MRKIRANAIAILTVAWILGTFYYLWQDNRAHAASSGGRGAQRAGRRSEQLREDRTIPLIVTGTPSKGFDEKAYLSAKQLKAGEDPYRQHAFNQLESDKLSPDRPIRDTRHYSCPSVSYSSDLPATSVIITFHNEARSTLLRTVKSVLNRTPANLIQEIILVDDFSSDPEDCLLLTRIPKVKCLRNDRREGLIRSRVRGADVAAATVLTFLDSHCEVNTEWLPPMLQRVKEDHTRVVSPIIDVISLDNFAYLAASADLRGGFDWSLHFKWEQIPLEQKMTRTDPTRPIRTPVIAGGIFVIDKSWFNHLGKYDAQMDIWGGENFELSFRVWMCGGSLEIVPCSRVGHVFRKRHPYNFPEGNALTYIRNTKRTAEVWMDEYKQYYYEARPSAIGKAFGSVATRIEQRKKMNCKSFRWYLENVYPELTVPVKEALPGIIKQGVNCLESQGQNTAGDFLLGMGICRGSAKNPQPAQAWLFSDHLIQQQGKCLAATSTLMSSPGSPVILQMCNPREGKQKWRRKGSFIQHSVSGLCLETKPAQLVTSKCQADAQAQQWQLLPHT</sequence>
<name>GLT16_HUMAN</name>
<protein>
    <recommendedName>
        <fullName>Polypeptide N-acetylgalactosaminyltransferase 16</fullName>
        <ecNumber>2.4.1.41</ecNumber>
    </recommendedName>
    <alternativeName>
        <fullName>Polypeptide GalNAc transferase 16</fullName>
        <shortName>GalNAc-T16</shortName>
    </alternativeName>
    <alternativeName>
        <fullName>Polypeptide GalNAc transferase-like protein 1</fullName>
        <shortName>GalNAc-T-like protein 1</shortName>
        <shortName>pp-GaNTase-like protein 1</shortName>
    </alternativeName>
    <alternativeName>
        <fullName>Polypeptide N-acetylgalactosaminyltransferase-like protein 1</fullName>
    </alternativeName>
    <alternativeName>
        <fullName>Protein-UDP acetylgalactosaminyltransferase-like protein 1</fullName>
    </alternativeName>
    <alternativeName>
        <fullName>UDP-GalNAc:polypeptide N-acetylgalactosaminyltransferase-like protein 1</fullName>
    </alternativeName>
</protein>
<gene>
    <name type="primary">GALNT16</name>
    <name type="synonym">GALNTL1</name>
    <name type="synonym">KIAA1130</name>
</gene>
<dbReference type="EC" id="2.4.1.41"/>
<dbReference type="EMBL" id="AB032956">
    <property type="protein sequence ID" value="BAA86444.1"/>
    <property type="status" value="ALT_INIT"/>
    <property type="molecule type" value="mRNA"/>
</dbReference>
<dbReference type="EMBL" id="AB078143">
    <property type="protein sequence ID" value="BAD93178.1"/>
    <property type="molecule type" value="mRNA"/>
</dbReference>
<dbReference type="EMBL" id="AK289745">
    <property type="protein sequence ID" value="BAF82434.1"/>
    <property type="molecule type" value="mRNA"/>
</dbReference>
<dbReference type="EMBL" id="CH471061">
    <property type="protein sequence ID" value="EAW80987.1"/>
    <property type="molecule type" value="Genomic_DNA"/>
</dbReference>
<dbReference type="EMBL" id="BC036812">
    <property type="protein sequence ID" value="AAH36812.2"/>
    <property type="molecule type" value="mRNA"/>
</dbReference>
<dbReference type="EMBL" id="BC098578">
    <property type="protein sequence ID" value="AAH98578.1"/>
    <property type="molecule type" value="mRNA"/>
</dbReference>
<dbReference type="CCDS" id="CCDS32107.1">
    <molecule id="Q8N428-1"/>
</dbReference>
<dbReference type="RefSeq" id="NP_001161840.1">
    <molecule id="Q8N428-1"/>
    <property type="nucleotide sequence ID" value="NM_001168368.2"/>
</dbReference>
<dbReference type="RefSeq" id="NP_065743.2">
    <molecule id="Q8N428-1"/>
    <property type="nucleotide sequence ID" value="NM_020692.3"/>
</dbReference>
<dbReference type="RefSeq" id="XP_011535307.1">
    <property type="nucleotide sequence ID" value="XM_011537005.1"/>
</dbReference>
<dbReference type="RefSeq" id="XP_011535308.1">
    <molecule id="Q8N428-1"/>
    <property type="nucleotide sequence ID" value="XM_011537006.4"/>
</dbReference>
<dbReference type="RefSeq" id="XP_016876987.1">
    <molecule id="Q8N428-1"/>
    <property type="nucleotide sequence ID" value="XM_017021498.2"/>
</dbReference>
<dbReference type="RefSeq" id="XP_047287574.1">
    <molecule id="Q8N428-1"/>
    <property type="nucleotide sequence ID" value="XM_047431618.1"/>
</dbReference>
<dbReference type="RefSeq" id="XP_054232422.1">
    <molecule id="Q8N428-1"/>
    <property type="nucleotide sequence ID" value="XM_054376447.1"/>
</dbReference>
<dbReference type="RefSeq" id="XP_054232423.1">
    <molecule id="Q8N428-1"/>
    <property type="nucleotide sequence ID" value="XM_054376448.1"/>
</dbReference>
<dbReference type="RefSeq" id="XP_054232424.1">
    <molecule id="Q8N428-1"/>
    <property type="nucleotide sequence ID" value="XM_054376449.1"/>
</dbReference>
<dbReference type="SMR" id="Q8N428"/>
<dbReference type="BioGRID" id="121524">
    <property type="interactions" value="22"/>
</dbReference>
<dbReference type="FunCoup" id="Q8N428">
    <property type="interactions" value="384"/>
</dbReference>
<dbReference type="IntAct" id="Q8N428">
    <property type="interactions" value="19"/>
</dbReference>
<dbReference type="STRING" id="9606.ENSP00000336729"/>
<dbReference type="CAZy" id="CBM13">
    <property type="family name" value="Carbohydrate-Binding Module Family 13"/>
</dbReference>
<dbReference type="CAZy" id="GT27">
    <property type="family name" value="Glycosyltransferase Family 27"/>
</dbReference>
<dbReference type="GlyGen" id="Q8N428">
    <property type="glycosylation" value="4 sites, 1 O-linked glycan (4 sites)"/>
</dbReference>
<dbReference type="iPTMnet" id="Q8N428"/>
<dbReference type="PhosphoSitePlus" id="Q8N428"/>
<dbReference type="BioMuta" id="GALNT16"/>
<dbReference type="DMDM" id="51316024"/>
<dbReference type="jPOST" id="Q8N428"/>
<dbReference type="MassIVE" id="Q8N428"/>
<dbReference type="PaxDb" id="9606-ENSP00000336729"/>
<dbReference type="PeptideAtlas" id="Q8N428"/>
<dbReference type="ProteomicsDB" id="71869">
    <molecule id="Q8N428-1"/>
</dbReference>
<dbReference type="ProteomicsDB" id="71870">
    <molecule id="Q8N428-2"/>
</dbReference>
<dbReference type="Pumba" id="Q8N428"/>
<dbReference type="Antibodypedia" id="25033">
    <property type="antibodies" value="62 antibodies from 16 providers"/>
</dbReference>
<dbReference type="DNASU" id="57452"/>
<dbReference type="Ensembl" id="ENST00000337827.8">
    <molecule id="Q8N428-1"/>
    <property type="protein sequence ID" value="ENSP00000336729.4"/>
    <property type="gene ID" value="ENSG00000100626.17"/>
</dbReference>
<dbReference type="Ensembl" id="ENST00000448469.8">
    <molecule id="Q8N428-1"/>
    <property type="protein sequence ID" value="ENSP00000402970.3"/>
    <property type="gene ID" value="ENSG00000100626.17"/>
</dbReference>
<dbReference type="Ensembl" id="ENST00000553471.6">
    <molecule id="Q8N428-2"/>
    <property type="protein sequence ID" value="ENSP00000451420.1"/>
    <property type="gene ID" value="ENSG00000100626.17"/>
</dbReference>
<dbReference type="Ensembl" id="ENST00000553669.1">
    <molecule id="Q8N428-2"/>
    <property type="protein sequence ID" value="ENSP00000451200.1"/>
    <property type="gene ID" value="ENSG00000100626.17"/>
</dbReference>
<dbReference type="GeneID" id="57452"/>
<dbReference type="KEGG" id="hsa:57452"/>
<dbReference type="MANE-Select" id="ENST00000448469.8">
    <property type="protein sequence ID" value="ENSP00000402970.3"/>
    <property type="RefSeq nucleotide sequence ID" value="NM_001168368.2"/>
    <property type="RefSeq protein sequence ID" value="NP_001161840.1"/>
</dbReference>
<dbReference type="UCSC" id="uc001xla.3">
    <molecule id="Q8N428-1"/>
    <property type="organism name" value="human"/>
</dbReference>
<dbReference type="AGR" id="HGNC:23233"/>
<dbReference type="CTD" id="57452"/>
<dbReference type="DisGeNET" id="57452"/>
<dbReference type="GeneCards" id="GALNT16"/>
<dbReference type="HGNC" id="HGNC:23233">
    <property type="gene designation" value="GALNT16"/>
</dbReference>
<dbReference type="HPA" id="ENSG00000100626">
    <property type="expression patterns" value="Tissue enhanced (heart)"/>
</dbReference>
<dbReference type="MIM" id="615132">
    <property type="type" value="gene"/>
</dbReference>
<dbReference type="neXtProt" id="NX_Q8N428"/>
<dbReference type="OpenTargets" id="ENSG00000100626"/>
<dbReference type="PharmGKB" id="PA134991608"/>
<dbReference type="VEuPathDB" id="HostDB:ENSG00000100626"/>
<dbReference type="eggNOG" id="KOG3738">
    <property type="taxonomic scope" value="Eukaryota"/>
</dbReference>
<dbReference type="GeneTree" id="ENSGT00940000158846"/>
<dbReference type="HOGENOM" id="CLU_013477_0_2_1"/>
<dbReference type="InParanoid" id="Q8N428"/>
<dbReference type="OMA" id="LGQQWEL"/>
<dbReference type="OrthoDB" id="429263at2759"/>
<dbReference type="PAN-GO" id="Q8N428">
    <property type="GO annotations" value="3 GO annotations based on evolutionary models"/>
</dbReference>
<dbReference type="PhylomeDB" id="Q8N428"/>
<dbReference type="TreeFam" id="TF313267"/>
<dbReference type="PathwayCommons" id="Q8N428"/>
<dbReference type="Reactome" id="R-HSA-913709">
    <property type="pathway name" value="O-linked glycosylation of mucins"/>
</dbReference>
<dbReference type="SABIO-RK" id="Q8N428"/>
<dbReference type="SignaLink" id="Q8N428"/>
<dbReference type="UniPathway" id="UPA00378"/>
<dbReference type="BioGRID-ORCS" id="57452">
    <property type="hits" value="14 hits in 1133 CRISPR screens"/>
</dbReference>
<dbReference type="ChiTaRS" id="GALNT16">
    <property type="organism name" value="human"/>
</dbReference>
<dbReference type="GenomeRNAi" id="57452"/>
<dbReference type="Pharos" id="Q8N428">
    <property type="development level" value="Tbio"/>
</dbReference>
<dbReference type="PRO" id="PR:Q8N428"/>
<dbReference type="Proteomes" id="UP000005640">
    <property type="component" value="Chromosome 14"/>
</dbReference>
<dbReference type="RNAct" id="Q8N428">
    <property type="molecule type" value="protein"/>
</dbReference>
<dbReference type="Bgee" id="ENSG00000100626">
    <property type="expression patterns" value="Expressed in endothelial cell and 146 other cell types or tissues"/>
</dbReference>
<dbReference type="ExpressionAtlas" id="Q8N428">
    <property type="expression patterns" value="baseline and differential"/>
</dbReference>
<dbReference type="GO" id="GO:0005794">
    <property type="term" value="C:Golgi apparatus"/>
    <property type="evidence" value="ECO:0000318"/>
    <property type="project" value="GO_Central"/>
</dbReference>
<dbReference type="GO" id="GO:0000139">
    <property type="term" value="C:Golgi membrane"/>
    <property type="evidence" value="ECO:0007669"/>
    <property type="project" value="UniProtKB-SubCell"/>
</dbReference>
<dbReference type="GO" id="GO:0030246">
    <property type="term" value="F:carbohydrate binding"/>
    <property type="evidence" value="ECO:0007669"/>
    <property type="project" value="UniProtKB-KW"/>
</dbReference>
<dbReference type="GO" id="GO:0046872">
    <property type="term" value="F:metal ion binding"/>
    <property type="evidence" value="ECO:0007669"/>
    <property type="project" value="UniProtKB-KW"/>
</dbReference>
<dbReference type="GO" id="GO:0004653">
    <property type="term" value="F:polypeptide N-acetylgalactosaminyltransferase activity"/>
    <property type="evidence" value="ECO:0000314"/>
    <property type="project" value="UniProtKB"/>
</dbReference>
<dbReference type="GO" id="GO:0006493">
    <property type="term" value="P:protein O-linked glycosylation"/>
    <property type="evidence" value="ECO:0000318"/>
    <property type="project" value="GO_Central"/>
</dbReference>
<dbReference type="GO" id="GO:0018242">
    <property type="term" value="P:protein O-linked glycosylation via serine"/>
    <property type="evidence" value="ECO:0000314"/>
    <property type="project" value="UniProtKB"/>
</dbReference>
<dbReference type="GO" id="GO:0018243">
    <property type="term" value="P:protein O-linked glycosylation via threonine"/>
    <property type="evidence" value="ECO:0000314"/>
    <property type="project" value="UniProtKB"/>
</dbReference>
<dbReference type="CDD" id="cd23479">
    <property type="entry name" value="beta-trefoil_Ricin_GALNT16"/>
    <property type="match status" value="1"/>
</dbReference>
<dbReference type="CDD" id="cd02510">
    <property type="entry name" value="pp-GalNAc-T"/>
    <property type="match status" value="1"/>
</dbReference>
<dbReference type="FunFam" id="2.80.10.50:FF:000041">
    <property type="entry name" value="Polypeptide N-acetylgalactosaminyltransferase"/>
    <property type="match status" value="1"/>
</dbReference>
<dbReference type="FunFam" id="3.90.550.10:FF:000020">
    <property type="entry name" value="Polypeptide N-acetylgalactosaminyltransferase"/>
    <property type="match status" value="1"/>
</dbReference>
<dbReference type="Gene3D" id="2.80.10.50">
    <property type="match status" value="1"/>
</dbReference>
<dbReference type="Gene3D" id="3.90.550.10">
    <property type="entry name" value="Spore Coat Polysaccharide Biosynthesis Protein SpsA, Chain A"/>
    <property type="match status" value="1"/>
</dbReference>
<dbReference type="InterPro" id="IPR045885">
    <property type="entry name" value="GalNAc-T"/>
</dbReference>
<dbReference type="InterPro" id="IPR001173">
    <property type="entry name" value="Glyco_trans_2-like"/>
</dbReference>
<dbReference type="InterPro" id="IPR029044">
    <property type="entry name" value="Nucleotide-diphossugar_trans"/>
</dbReference>
<dbReference type="InterPro" id="IPR035992">
    <property type="entry name" value="Ricin_B-like_lectins"/>
</dbReference>
<dbReference type="InterPro" id="IPR000772">
    <property type="entry name" value="Ricin_B_lectin"/>
</dbReference>
<dbReference type="PANTHER" id="PTHR11675">
    <property type="entry name" value="N-ACETYLGALACTOSAMINYLTRANSFERASE"/>
    <property type="match status" value="1"/>
</dbReference>
<dbReference type="PANTHER" id="PTHR11675:SF3">
    <property type="entry name" value="POLYPEPTIDE N-ACETYLGALACTOSAMINYLTRANSFERASE 16"/>
    <property type="match status" value="1"/>
</dbReference>
<dbReference type="Pfam" id="PF00535">
    <property type="entry name" value="Glycos_transf_2"/>
    <property type="match status" value="1"/>
</dbReference>
<dbReference type="Pfam" id="PF00652">
    <property type="entry name" value="Ricin_B_lectin"/>
    <property type="match status" value="1"/>
</dbReference>
<dbReference type="SMART" id="SM00458">
    <property type="entry name" value="RICIN"/>
    <property type="match status" value="1"/>
</dbReference>
<dbReference type="SUPFAM" id="SSF53448">
    <property type="entry name" value="Nucleotide-diphospho-sugar transferases"/>
    <property type="match status" value="1"/>
</dbReference>
<dbReference type="SUPFAM" id="SSF50370">
    <property type="entry name" value="Ricin B-like lectins"/>
    <property type="match status" value="1"/>
</dbReference>
<dbReference type="PROSITE" id="PS50231">
    <property type="entry name" value="RICIN_B_LECTIN"/>
    <property type="match status" value="1"/>
</dbReference>
<evidence type="ECO:0000250" key="1"/>
<evidence type="ECO:0000255" key="2"/>
<evidence type="ECO:0000255" key="3">
    <source>
        <dbReference type="PROSITE-ProRule" id="PRU00174"/>
    </source>
</evidence>
<evidence type="ECO:0000256" key="4">
    <source>
        <dbReference type="SAM" id="MobiDB-lite"/>
    </source>
</evidence>
<evidence type="ECO:0000269" key="5">
    <source>
    </source>
</evidence>
<evidence type="ECO:0000269" key="6">
    <source>
    </source>
</evidence>
<evidence type="ECO:0000269" key="7">
    <source>
    </source>
</evidence>
<evidence type="ECO:0000303" key="8">
    <source>
    </source>
</evidence>
<evidence type="ECO:0000303" key="9">
    <source ref="2"/>
</evidence>
<evidence type="ECO:0000305" key="10"/>
<organism>
    <name type="scientific">Homo sapiens</name>
    <name type="common">Human</name>
    <dbReference type="NCBI Taxonomy" id="9606"/>
    <lineage>
        <taxon>Eukaryota</taxon>
        <taxon>Metazoa</taxon>
        <taxon>Chordata</taxon>
        <taxon>Craniata</taxon>
        <taxon>Vertebrata</taxon>
        <taxon>Euteleostomi</taxon>
        <taxon>Mammalia</taxon>
        <taxon>Eutheria</taxon>
        <taxon>Euarchontoglires</taxon>
        <taxon>Primates</taxon>
        <taxon>Haplorrhini</taxon>
        <taxon>Catarrhini</taxon>
        <taxon>Hominidae</taxon>
        <taxon>Homo</taxon>
    </lineage>
</organism>
<proteinExistence type="evidence at protein level"/>
<feature type="chain" id="PRO_0000059135" description="Polypeptide N-acetylgalactosaminyltransferase 16">
    <location>
        <begin position="1"/>
        <end position="558"/>
    </location>
</feature>
<feature type="topological domain" description="Cytoplasmic" evidence="2">
    <location>
        <begin position="1"/>
        <end position="6"/>
    </location>
</feature>
<feature type="transmembrane region" description="Helical; Signal-anchor for type II membrane protein" evidence="2">
    <location>
        <begin position="7"/>
        <end position="26"/>
    </location>
</feature>
<feature type="topological domain" description="Lumenal" evidence="2">
    <location>
        <begin position="27"/>
        <end position="558"/>
    </location>
</feature>
<feature type="domain" description="Ricin B-type lectin" evidence="3">
    <location>
        <begin position="428"/>
        <end position="555"/>
    </location>
</feature>
<feature type="region of interest" description="Disordered" evidence="4">
    <location>
        <begin position="33"/>
        <end position="54"/>
    </location>
</feature>
<feature type="region of interest" description="Catalytic subdomain A">
    <location>
        <begin position="122"/>
        <end position="227"/>
    </location>
</feature>
<feature type="region of interest" description="Catalytic subdomain B">
    <location>
        <begin position="286"/>
        <end position="348"/>
    </location>
</feature>
<feature type="compositionally biased region" description="Basic and acidic residues" evidence="4">
    <location>
        <begin position="45"/>
        <end position="54"/>
    </location>
</feature>
<feature type="binding site" evidence="1">
    <location>
        <position position="163"/>
    </location>
    <ligand>
        <name>substrate</name>
    </ligand>
</feature>
<feature type="binding site" evidence="1">
    <location>
        <position position="188"/>
    </location>
    <ligand>
        <name>substrate</name>
    </ligand>
</feature>
<feature type="binding site" evidence="1">
    <location>
        <position position="211"/>
    </location>
    <ligand>
        <name>Mn(2+)</name>
        <dbReference type="ChEBI" id="CHEBI:29035"/>
    </ligand>
</feature>
<feature type="binding site" evidence="1">
    <location>
        <position position="212"/>
    </location>
    <ligand>
        <name>substrate</name>
    </ligand>
</feature>
<feature type="binding site" evidence="1">
    <location>
        <position position="213"/>
    </location>
    <ligand>
        <name>Mn(2+)</name>
        <dbReference type="ChEBI" id="CHEBI:29035"/>
    </ligand>
</feature>
<feature type="binding site" evidence="1">
    <location>
        <position position="317"/>
    </location>
    <ligand>
        <name>substrate</name>
    </ligand>
</feature>
<feature type="binding site" evidence="1">
    <location>
        <position position="345"/>
    </location>
    <ligand>
        <name>Mn(2+)</name>
        <dbReference type="ChEBI" id="CHEBI:29035"/>
    </ligand>
</feature>
<feature type="binding site" evidence="1">
    <location>
        <position position="348"/>
    </location>
    <ligand>
        <name>substrate</name>
    </ligand>
</feature>
<feature type="binding site" evidence="1">
    <location>
        <position position="351"/>
    </location>
    <ligand>
        <name>substrate</name>
    </ligand>
</feature>
<feature type="binding site" evidence="1">
    <location>
        <position position="353"/>
    </location>
    <ligand>
        <name>substrate</name>
    </ligand>
</feature>
<feature type="disulfide bond" evidence="3">
    <location>
        <begin position="113"/>
        <end position="340"/>
    </location>
</feature>
<feature type="disulfide bond" evidence="3">
    <location>
        <begin position="331"/>
        <end position="409"/>
    </location>
</feature>
<feature type="disulfide bond" evidence="3">
    <location>
        <begin position="441"/>
        <end position="460"/>
    </location>
</feature>
<feature type="disulfide bond" evidence="3">
    <location>
        <begin position="486"/>
        <end position="506"/>
    </location>
</feature>
<feature type="disulfide bond" evidence="3">
    <location>
        <begin position="530"/>
        <end position="543"/>
    </location>
</feature>
<feature type="splice variant" id="VSP_011231" description="In isoform 2." evidence="8 9">
    <original>KWRRKGSFIQHSVSGLCLETKPAQLVTSKCQADAQAQQWQLLPHT</original>
    <variation>VSLLASGPEAQQPEGPCLRVADLGRRAPD</variation>
    <location>
        <begin position="514"/>
        <end position="558"/>
    </location>
</feature>
<feature type="sequence variant" id="VAR_055848" description="In dbSNP:rs12879377." evidence="5 6">
    <original>V</original>
    <variation>M</variation>
    <location>
        <position position="201"/>
    </location>
</feature>
<feature type="sequence variant" id="VAR_061195" description="In dbSNP:rs59840366.">
    <original>P</original>
    <variation>S</variation>
    <location>
        <position position="497"/>
    </location>
</feature>
<accession>Q8N428</accession>
<accession>Q4KMG3</accession>
<accession>Q58A55</accession>
<accession>Q9ULT9</accession>
<reference key="1">
    <citation type="journal article" date="1999" name="DNA Res.">
        <title>Characterization of cDNA clones selected by the GeneMark analysis from size-fractionated cDNA libraries from human brain.</title>
        <authorList>
            <person name="Hirosawa M."/>
            <person name="Nagase T."/>
            <person name="Ishikawa K."/>
            <person name="Kikuno R."/>
            <person name="Nomura N."/>
            <person name="Ohara O."/>
        </authorList>
    </citation>
    <scope>NUCLEOTIDE SEQUENCE [LARGE SCALE MRNA] (ISOFORM 2)</scope>
    <source>
        <tissue>Brain</tissue>
    </source>
</reference>
<reference key="2">
    <citation type="submission" date="2002-01" db="EMBL/GenBank/DDBJ databases">
        <title>Cloning and Characterization of New Member of Human UDP-N-acetyl-alpha-D-galactosamine:polypeptide N-acetylgalactosaminyltransferase, Designated GalNAc-T16.</title>
        <authorList>
            <person name="Guo J."/>
            <person name="Zhang Y."/>
            <person name="Chen L."/>
            <person name="Narimatsu H."/>
        </authorList>
    </citation>
    <scope>NUCLEOTIDE SEQUENCE [MRNA] (ISOFORM 2)</scope>
    <source>
        <tissue>Fetal brain</tissue>
    </source>
</reference>
<reference key="3">
    <citation type="journal article" date="2004" name="Nat. Genet.">
        <title>Complete sequencing and characterization of 21,243 full-length human cDNAs.</title>
        <authorList>
            <person name="Ota T."/>
            <person name="Suzuki Y."/>
            <person name="Nishikawa T."/>
            <person name="Otsuki T."/>
            <person name="Sugiyama T."/>
            <person name="Irie R."/>
            <person name="Wakamatsu A."/>
            <person name="Hayashi K."/>
            <person name="Sato H."/>
            <person name="Nagai K."/>
            <person name="Kimura K."/>
            <person name="Makita H."/>
            <person name="Sekine M."/>
            <person name="Obayashi M."/>
            <person name="Nishi T."/>
            <person name="Shibahara T."/>
            <person name="Tanaka T."/>
            <person name="Ishii S."/>
            <person name="Yamamoto J."/>
            <person name="Saito K."/>
            <person name="Kawai Y."/>
            <person name="Isono Y."/>
            <person name="Nakamura Y."/>
            <person name="Nagahari K."/>
            <person name="Murakami K."/>
            <person name="Yasuda T."/>
            <person name="Iwayanagi T."/>
            <person name="Wagatsuma M."/>
            <person name="Shiratori A."/>
            <person name="Sudo H."/>
            <person name="Hosoiri T."/>
            <person name="Kaku Y."/>
            <person name="Kodaira H."/>
            <person name="Kondo H."/>
            <person name="Sugawara M."/>
            <person name="Takahashi M."/>
            <person name="Kanda K."/>
            <person name="Yokoi T."/>
            <person name="Furuya T."/>
            <person name="Kikkawa E."/>
            <person name="Omura Y."/>
            <person name="Abe K."/>
            <person name="Kamihara K."/>
            <person name="Katsuta N."/>
            <person name="Sato K."/>
            <person name="Tanikawa M."/>
            <person name="Yamazaki M."/>
            <person name="Ninomiya K."/>
            <person name="Ishibashi T."/>
            <person name="Yamashita H."/>
            <person name="Murakawa K."/>
            <person name="Fujimori K."/>
            <person name="Tanai H."/>
            <person name="Kimata M."/>
            <person name="Watanabe M."/>
            <person name="Hiraoka S."/>
            <person name="Chiba Y."/>
            <person name="Ishida S."/>
            <person name="Ono Y."/>
            <person name="Takiguchi S."/>
            <person name="Watanabe S."/>
            <person name="Yosida M."/>
            <person name="Hotuta T."/>
            <person name="Kusano J."/>
            <person name="Kanehori K."/>
            <person name="Takahashi-Fujii A."/>
            <person name="Hara H."/>
            <person name="Tanase T.-O."/>
            <person name="Nomura Y."/>
            <person name="Togiya S."/>
            <person name="Komai F."/>
            <person name="Hara R."/>
            <person name="Takeuchi K."/>
            <person name="Arita M."/>
            <person name="Imose N."/>
            <person name="Musashino K."/>
            <person name="Yuuki H."/>
            <person name="Oshima A."/>
            <person name="Sasaki N."/>
            <person name="Aotsuka S."/>
            <person name="Yoshikawa Y."/>
            <person name="Matsunawa H."/>
            <person name="Ichihara T."/>
            <person name="Shiohata N."/>
            <person name="Sano S."/>
            <person name="Moriya S."/>
            <person name="Momiyama H."/>
            <person name="Satoh N."/>
            <person name="Takami S."/>
            <person name="Terashima Y."/>
            <person name="Suzuki O."/>
            <person name="Nakagawa S."/>
            <person name="Senoh A."/>
            <person name="Mizoguchi H."/>
            <person name="Goto Y."/>
            <person name="Shimizu F."/>
            <person name="Wakebe H."/>
            <person name="Hishigaki H."/>
            <person name="Watanabe T."/>
            <person name="Sugiyama A."/>
            <person name="Takemoto M."/>
            <person name="Kawakami B."/>
            <person name="Yamazaki M."/>
            <person name="Watanabe K."/>
            <person name="Kumagai A."/>
            <person name="Itakura S."/>
            <person name="Fukuzumi Y."/>
            <person name="Fujimori Y."/>
            <person name="Komiyama M."/>
            <person name="Tashiro H."/>
            <person name="Tanigami A."/>
            <person name="Fujiwara T."/>
            <person name="Ono T."/>
            <person name="Yamada K."/>
            <person name="Fujii Y."/>
            <person name="Ozaki K."/>
            <person name="Hirao M."/>
            <person name="Ohmori Y."/>
            <person name="Kawabata A."/>
            <person name="Hikiji T."/>
            <person name="Kobatake N."/>
            <person name="Inagaki H."/>
            <person name="Ikema Y."/>
            <person name="Okamoto S."/>
            <person name="Okitani R."/>
            <person name="Kawakami T."/>
            <person name="Noguchi S."/>
            <person name="Itoh T."/>
            <person name="Shigeta K."/>
            <person name="Senba T."/>
            <person name="Matsumura K."/>
            <person name="Nakajima Y."/>
            <person name="Mizuno T."/>
            <person name="Morinaga M."/>
            <person name="Sasaki M."/>
            <person name="Togashi T."/>
            <person name="Oyama M."/>
            <person name="Hata H."/>
            <person name="Watanabe M."/>
            <person name="Komatsu T."/>
            <person name="Mizushima-Sugano J."/>
            <person name="Satoh T."/>
            <person name="Shirai Y."/>
            <person name="Takahashi Y."/>
            <person name="Nakagawa K."/>
            <person name="Okumura K."/>
            <person name="Nagase T."/>
            <person name="Nomura N."/>
            <person name="Kikuchi H."/>
            <person name="Masuho Y."/>
            <person name="Yamashita R."/>
            <person name="Nakai K."/>
            <person name="Yada T."/>
            <person name="Nakamura Y."/>
            <person name="Ohara O."/>
            <person name="Isogai T."/>
            <person name="Sugano S."/>
        </authorList>
    </citation>
    <scope>NUCLEOTIDE SEQUENCE [LARGE SCALE MRNA] (ISOFORM 1)</scope>
    <scope>VARIANT MET-201</scope>
    <source>
        <tissue>Brain</tissue>
    </source>
</reference>
<reference key="4">
    <citation type="submission" date="2005-07" db="EMBL/GenBank/DDBJ databases">
        <authorList>
            <person name="Mural R.J."/>
            <person name="Istrail S."/>
            <person name="Sutton G."/>
            <person name="Florea L."/>
            <person name="Halpern A.L."/>
            <person name="Mobarry C.M."/>
            <person name="Lippert R."/>
            <person name="Walenz B."/>
            <person name="Shatkay H."/>
            <person name="Dew I."/>
            <person name="Miller J.R."/>
            <person name="Flanigan M.J."/>
            <person name="Edwards N.J."/>
            <person name="Bolanos R."/>
            <person name="Fasulo D."/>
            <person name="Halldorsson B.V."/>
            <person name="Hannenhalli S."/>
            <person name="Turner R."/>
            <person name="Yooseph S."/>
            <person name="Lu F."/>
            <person name="Nusskern D.R."/>
            <person name="Shue B.C."/>
            <person name="Zheng X.H."/>
            <person name="Zhong F."/>
            <person name="Delcher A.L."/>
            <person name="Huson D.H."/>
            <person name="Kravitz S.A."/>
            <person name="Mouchard L."/>
            <person name="Reinert K."/>
            <person name="Remington K.A."/>
            <person name="Clark A.G."/>
            <person name="Waterman M.S."/>
            <person name="Eichler E.E."/>
            <person name="Adams M.D."/>
            <person name="Hunkapiller M.W."/>
            <person name="Myers E.W."/>
            <person name="Venter J.C."/>
        </authorList>
    </citation>
    <scope>NUCLEOTIDE SEQUENCE [LARGE SCALE GENOMIC DNA]</scope>
</reference>
<reference key="5">
    <citation type="journal article" date="2004" name="Genome Res.">
        <title>The status, quality, and expansion of the NIH full-length cDNA project: the Mammalian Gene Collection (MGC).</title>
        <authorList>
            <consortium name="The MGC Project Team"/>
        </authorList>
    </citation>
    <scope>NUCLEOTIDE SEQUENCE [LARGE SCALE MRNA] (ISOFORM 1)</scope>
    <scope>VARIANT MET-201</scope>
    <source>
        <tissue>Brain</tissue>
        <tissue>Chondrosarcoma</tissue>
    </source>
</reference>
<reference key="6">
    <citation type="journal article" date="2012" name="Glycobiology">
        <title>UDP-N-acetyl-alpha-D-galactosamine:polypeptide N-acetylgalactosaminyltransferases: completion of the family tree.</title>
        <authorList>
            <person name="Raman J."/>
            <person name="Guan Y."/>
            <person name="Perrine C.L."/>
            <person name="Gerken T.A."/>
            <person name="Tabak L.A."/>
        </authorList>
    </citation>
    <scope>FUNCTION</scope>
    <scope>CATALYTIC ACTIVITY</scope>
    <scope>BIOPHYSICOCHEMICAL PROPERTIES</scope>
</reference>